<protein>
    <recommendedName>
        <fullName evidence="1">Bifunctional glutamine synthetase adenylyltransferase/adenylyl-removing enzyme</fullName>
    </recommendedName>
    <alternativeName>
        <fullName evidence="1">ATP:glutamine synthetase adenylyltransferase</fullName>
    </alternativeName>
    <alternativeName>
        <fullName evidence="1">ATase</fullName>
    </alternativeName>
    <domain>
        <recommendedName>
            <fullName evidence="1">Glutamine synthetase adenylyl-L-tyrosine phosphorylase</fullName>
            <ecNumber evidence="1">2.7.7.89</ecNumber>
        </recommendedName>
        <alternativeName>
            <fullName evidence="1">Adenylyl removase</fullName>
            <shortName evidence="1">AR</shortName>
            <shortName evidence="1">AT-N</shortName>
        </alternativeName>
    </domain>
    <domain>
        <recommendedName>
            <fullName evidence="1">Glutamine synthetase adenylyl transferase</fullName>
            <ecNumber evidence="1">2.7.7.42</ecNumber>
        </recommendedName>
        <alternativeName>
            <fullName evidence="1">Adenylyl transferase</fullName>
            <shortName evidence="1">AT</shortName>
            <shortName evidence="1">AT-C</shortName>
        </alternativeName>
    </domain>
</protein>
<feature type="chain" id="PRO_0000209269" description="Bifunctional glutamine synthetase adenylyltransferase/adenylyl-removing enzyme">
    <location>
        <begin position="1"/>
        <end position="985"/>
    </location>
</feature>
<feature type="region of interest" description="Adenylyl removase" evidence="1">
    <location>
        <begin position="1"/>
        <end position="460"/>
    </location>
</feature>
<feature type="region of interest" description="Adenylyl transferase" evidence="1">
    <location>
        <begin position="476"/>
        <end position="985"/>
    </location>
</feature>
<organism>
    <name type="scientific">Pseudomonas syringae pv. tomato (strain ATCC BAA-871 / DC3000)</name>
    <dbReference type="NCBI Taxonomy" id="223283"/>
    <lineage>
        <taxon>Bacteria</taxon>
        <taxon>Pseudomonadati</taxon>
        <taxon>Pseudomonadota</taxon>
        <taxon>Gammaproteobacteria</taxon>
        <taxon>Pseudomonadales</taxon>
        <taxon>Pseudomonadaceae</taxon>
        <taxon>Pseudomonas</taxon>
    </lineage>
</organism>
<dbReference type="EC" id="2.7.7.89" evidence="1"/>
<dbReference type="EC" id="2.7.7.42" evidence="1"/>
<dbReference type="EMBL" id="AE016853">
    <property type="protein sequence ID" value="AAO58432.1"/>
    <property type="molecule type" value="Genomic_DNA"/>
</dbReference>
<dbReference type="RefSeq" id="NP_794737.1">
    <property type="nucleotide sequence ID" value="NC_004578.1"/>
</dbReference>
<dbReference type="RefSeq" id="WP_005762959.1">
    <property type="nucleotide sequence ID" value="NC_004578.1"/>
</dbReference>
<dbReference type="SMR" id="Q87VD5"/>
<dbReference type="STRING" id="223283.PSPTO_5004"/>
<dbReference type="GeneID" id="1186689"/>
<dbReference type="KEGG" id="pst:PSPTO_5004"/>
<dbReference type="PATRIC" id="fig|223283.9.peg.5121"/>
<dbReference type="eggNOG" id="COG1391">
    <property type="taxonomic scope" value="Bacteria"/>
</dbReference>
<dbReference type="HOGENOM" id="CLU_006233_0_1_6"/>
<dbReference type="OrthoDB" id="9759366at2"/>
<dbReference type="PhylomeDB" id="Q87VD5"/>
<dbReference type="Proteomes" id="UP000002515">
    <property type="component" value="Chromosome"/>
</dbReference>
<dbReference type="GO" id="GO:0005829">
    <property type="term" value="C:cytosol"/>
    <property type="evidence" value="ECO:0007669"/>
    <property type="project" value="TreeGrafter"/>
</dbReference>
<dbReference type="GO" id="GO:0008882">
    <property type="term" value="F:[glutamate-ammonia-ligase] adenylyltransferase activity"/>
    <property type="evidence" value="ECO:0007669"/>
    <property type="project" value="UniProtKB-UniRule"/>
</dbReference>
<dbReference type="GO" id="GO:0047388">
    <property type="term" value="F:[glutamine synthetase]-adenylyl-L-tyrosine phosphorylase activity"/>
    <property type="evidence" value="ECO:0007669"/>
    <property type="project" value="UniProtKB-EC"/>
</dbReference>
<dbReference type="GO" id="GO:0005524">
    <property type="term" value="F:ATP binding"/>
    <property type="evidence" value="ECO:0007669"/>
    <property type="project" value="UniProtKB-UniRule"/>
</dbReference>
<dbReference type="GO" id="GO:0000287">
    <property type="term" value="F:magnesium ion binding"/>
    <property type="evidence" value="ECO:0007669"/>
    <property type="project" value="UniProtKB-UniRule"/>
</dbReference>
<dbReference type="GO" id="GO:0000820">
    <property type="term" value="P:regulation of glutamine family amino acid metabolic process"/>
    <property type="evidence" value="ECO:0007669"/>
    <property type="project" value="UniProtKB-UniRule"/>
</dbReference>
<dbReference type="CDD" id="cd05401">
    <property type="entry name" value="NT_GlnE_GlnD_like"/>
    <property type="match status" value="2"/>
</dbReference>
<dbReference type="FunFam" id="1.20.120.1510:FF:000002">
    <property type="entry name" value="Bifunctional glutamine synthetase adenylyltransferase/adenylyl-removing enzyme"/>
    <property type="match status" value="1"/>
</dbReference>
<dbReference type="FunFam" id="1.20.120.330:FF:000005">
    <property type="entry name" value="Bifunctional glutamine synthetase adenylyltransferase/adenylyl-removing enzyme"/>
    <property type="match status" value="1"/>
</dbReference>
<dbReference type="FunFam" id="1.20.120.330:FF:000019">
    <property type="entry name" value="Bifunctional glutamine synthetase adenylyltransferase/adenylyl-removing enzyme"/>
    <property type="match status" value="1"/>
</dbReference>
<dbReference type="FunFam" id="3.30.460.10:FF:000009">
    <property type="entry name" value="Bifunctional glutamine synthetase adenylyltransferase/adenylyl-removing enzyme"/>
    <property type="match status" value="2"/>
</dbReference>
<dbReference type="Gene3D" id="1.20.120.1510">
    <property type="match status" value="1"/>
</dbReference>
<dbReference type="Gene3D" id="3.30.460.10">
    <property type="entry name" value="Beta Polymerase, domain 2"/>
    <property type="match status" value="2"/>
</dbReference>
<dbReference type="Gene3D" id="1.20.120.330">
    <property type="entry name" value="Nucleotidyltransferases domain 2"/>
    <property type="match status" value="2"/>
</dbReference>
<dbReference type="HAMAP" id="MF_00802">
    <property type="entry name" value="GlnE"/>
    <property type="match status" value="1"/>
</dbReference>
<dbReference type="InterPro" id="IPR023057">
    <property type="entry name" value="GlnE"/>
</dbReference>
<dbReference type="InterPro" id="IPR005190">
    <property type="entry name" value="GlnE_rpt_dom"/>
</dbReference>
<dbReference type="InterPro" id="IPR043519">
    <property type="entry name" value="NT_sf"/>
</dbReference>
<dbReference type="InterPro" id="IPR013546">
    <property type="entry name" value="PII_UdlTrfase/GS_AdlTrfase"/>
</dbReference>
<dbReference type="NCBIfam" id="NF008292">
    <property type="entry name" value="PRK11072.1"/>
    <property type="match status" value="1"/>
</dbReference>
<dbReference type="PANTHER" id="PTHR30621:SF0">
    <property type="entry name" value="BIFUNCTIONAL GLUTAMINE SYNTHETASE ADENYLYLTRANSFERASE_ADENYLYL-REMOVING ENZYME"/>
    <property type="match status" value="1"/>
</dbReference>
<dbReference type="PANTHER" id="PTHR30621">
    <property type="entry name" value="GLUTAMINE SYNTHETASE ADENYLYLTRANSFERASE"/>
    <property type="match status" value="1"/>
</dbReference>
<dbReference type="Pfam" id="PF08335">
    <property type="entry name" value="GlnD_UR_UTase"/>
    <property type="match status" value="2"/>
</dbReference>
<dbReference type="Pfam" id="PF03710">
    <property type="entry name" value="GlnE"/>
    <property type="match status" value="2"/>
</dbReference>
<dbReference type="SUPFAM" id="SSF81301">
    <property type="entry name" value="Nucleotidyltransferase"/>
    <property type="match status" value="2"/>
</dbReference>
<dbReference type="SUPFAM" id="SSF81593">
    <property type="entry name" value="Nucleotidyltransferase substrate binding subunit/domain"/>
    <property type="match status" value="2"/>
</dbReference>
<gene>
    <name evidence="1" type="primary">glnE</name>
    <name type="ordered locus">PSPTO_5004</name>
</gene>
<evidence type="ECO:0000255" key="1">
    <source>
        <dbReference type="HAMAP-Rule" id="MF_00802"/>
    </source>
</evidence>
<keyword id="KW-0067">ATP-binding</keyword>
<keyword id="KW-0460">Magnesium</keyword>
<keyword id="KW-0511">Multifunctional enzyme</keyword>
<keyword id="KW-0547">Nucleotide-binding</keyword>
<keyword id="KW-0548">Nucleotidyltransferase</keyword>
<keyword id="KW-1185">Reference proteome</keyword>
<keyword id="KW-0808">Transferase</keyword>
<proteinExistence type="inferred from homology"/>
<comment type="function">
    <text evidence="1">Involved in the regulation of glutamine synthetase GlnA, a key enzyme in the process to assimilate ammonia. When cellular nitrogen levels are high, the C-terminal adenylyl transferase (AT) inactivates GlnA by covalent transfer of an adenylyl group from ATP to specific tyrosine residue of GlnA, thus reducing its activity. Conversely, when nitrogen levels are low, the N-terminal adenylyl removase (AR) activates GlnA by removing the adenylyl group by phosphorolysis, increasing its activity. The regulatory region of GlnE binds the signal transduction protein PII (GlnB) which indicates the nitrogen status of the cell.</text>
</comment>
<comment type="catalytic activity">
    <reaction evidence="1">
        <text>[glutamine synthetase]-O(4)-(5'-adenylyl)-L-tyrosine + phosphate = [glutamine synthetase]-L-tyrosine + ADP</text>
        <dbReference type="Rhea" id="RHEA:43716"/>
        <dbReference type="Rhea" id="RHEA-COMP:10660"/>
        <dbReference type="Rhea" id="RHEA-COMP:10661"/>
        <dbReference type="ChEBI" id="CHEBI:43474"/>
        <dbReference type="ChEBI" id="CHEBI:46858"/>
        <dbReference type="ChEBI" id="CHEBI:83624"/>
        <dbReference type="ChEBI" id="CHEBI:456216"/>
        <dbReference type="EC" id="2.7.7.89"/>
    </reaction>
</comment>
<comment type="catalytic activity">
    <reaction evidence="1">
        <text>[glutamine synthetase]-L-tyrosine + ATP = [glutamine synthetase]-O(4)-(5'-adenylyl)-L-tyrosine + diphosphate</text>
        <dbReference type="Rhea" id="RHEA:18589"/>
        <dbReference type="Rhea" id="RHEA-COMP:10660"/>
        <dbReference type="Rhea" id="RHEA-COMP:10661"/>
        <dbReference type="ChEBI" id="CHEBI:30616"/>
        <dbReference type="ChEBI" id="CHEBI:33019"/>
        <dbReference type="ChEBI" id="CHEBI:46858"/>
        <dbReference type="ChEBI" id="CHEBI:83624"/>
        <dbReference type="EC" id="2.7.7.42"/>
    </reaction>
</comment>
<comment type="cofactor">
    <cofactor evidence="1">
        <name>Mg(2+)</name>
        <dbReference type="ChEBI" id="CHEBI:18420"/>
    </cofactor>
</comment>
<comment type="similarity">
    <text evidence="1">Belongs to the GlnE family.</text>
</comment>
<accession>Q87VD5</accession>
<name>GLNE_PSESM</name>
<reference key="1">
    <citation type="journal article" date="2003" name="Proc. Natl. Acad. Sci. U.S.A.">
        <title>The complete genome sequence of the Arabidopsis and tomato pathogen Pseudomonas syringae pv. tomato DC3000.</title>
        <authorList>
            <person name="Buell C.R."/>
            <person name="Joardar V."/>
            <person name="Lindeberg M."/>
            <person name="Selengut J."/>
            <person name="Paulsen I.T."/>
            <person name="Gwinn M.L."/>
            <person name="Dodson R.J."/>
            <person name="DeBoy R.T."/>
            <person name="Durkin A.S."/>
            <person name="Kolonay J.F."/>
            <person name="Madupu R."/>
            <person name="Daugherty S.C."/>
            <person name="Brinkac L.M."/>
            <person name="Beanan M.J."/>
            <person name="Haft D.H."/>
            <person name="Nelson W.C."/>
            <person name="Davidsen T.M."/>
            <person name="Zafar N."/>
            <person name="Zhou L."/>
            <person name="Liu J."/>
            <person name="Yuan Q."/>
            <person name="Khouri H.M."/>
            <person name="Fedorova N.B."/>
            <person name="Tran B."/>
            <person name="Russell D."/>
            <person name="Berry K.J."/>
            <person name="Utterback T.R."/>
            <person name="Van Aken S.E."/>
            <person name="Feldblyum T.V."/>
            <person name="D'Ascenzo M."/>
            <person name="Deng W.-L."/>
            <person name="Ramos A.R."/>
            <person name="Alfano J.R."/>
            <person name="Cartinhour S."/>
            <person name="Chatterjee A.K."/>
            <person name="Delaney T.P."/>
            <person name="Lazarowitz S.G."/>
            <person name="Martin G.B."/>
            <person name="Schneider D.J."/>
            <person name="Tang X."/>
            <person name="Bender C.L."/>
            <person name="White O."/>
            <person name="Fraser C.M."/>
            <person name="Collmer A."/>
        </authorList>
    </citation>
    <scope>NUCLEOTIDE SEQUENCE [LARGE SCALE GENOMIC DNA]</scope>
    <source>
        <strain>ATCC BAA-871 / DC3000</strain>
    </source>
</reference>
<sequence>MSLPSLADFPAILLPFITRARQTWRTALTELSAEALASFEAWPEARRTAFDRVCAASDFVTEQICRDPQMLLQLAGSGELERSFSVGELRGQIADALSSAVTEDELGRNLRRQRARQQVRIIWRDLTRQADLIETCRDLSEMADASIDLAYQWLYPRHCQQFGTPTGRHCGLPQQMVILGMGKLGAVELNLSSDIDLIFAYPEGGETVGTKRALDNQEFFIRLGQRLIKALDPVTVDGFVFRVDMRLRPYGSSGALVLSFNALEQYYQDQGRDWERYAMIKARVVGGDLAAGAELLEMLRPFVYRRYLDFSAIEALRTMKQLIQQEVKRKGMAENIKLGAGGIREVEFIAQAFQLIHGGRDLSLQQRPLFNVLKTLEGQGYLPSAVTEELREGYEFLRYTEHAIQAIADRQTQMLPDNEQDQARIALIMGFADWASFHERLMYWRSRVSWHFRQVIADPDSDPDDELQDDSEVVVGGEWLPLWEESQDEDAAGRQLLQAGFVDTGKALKSLADLRSSPNLRSMQRLSRERLDAFIPRLLAQAVEHEKPDLVLERVLPLVEAVARRSAYLVLLTENPDALRQLLTLCAASPWIAEQIARFPLLLDELLNEGRLFNPPLAPELAAELRERLVRIPEDDLEQQMEALRHFKLAHSLRVAASEISGSLPLMKVSDYLTWLAEAILDQVLALAWRYSVARHGTPSRPDGTLCDPGFVIVGYGKVGGIELGHGSDLDLVFIHDGDLQTETDGAKPIDSAQFFTRLGQRVIHLLTTQTNSGQLYDVDMRLRPSGASGLLVSSLGAFARYQANEAWTWEHQALVRARVLTGSRDVGEQFEKVRADVLGRERDLDTLRAEVSEMRAKMRDNLGTRLTAAGRAANAFEASVPFDLKQDAGGIVDIEFMVQYAALAWSREHPALLQHTDNIRILEGLEEAGLLPDVDASLLREAYKAYRSAAHRQALQKQAGVVGGDQFHAQRREVMRIWAQMGLS</sequence>